<name>RLPA_RICPR</name>
<accession>Q9ZDE1</accession>
<proteinExistence type="inferred from homology"/>
<feature type="chain" id="PRO_0000190006" description="Endolytic peptidoglycan transglycosylase RlpA">
    <location>
        <begin position="1"/>
        <end position="320"/>
    </location>
</feature>
<organism>
    <name type="scientific">Rickettsia prowazekii (strain Madrid E)</name>
    <dbReference type="NCBI Taxonomy" id="272947"/>
    <lineage>
        <taxon>Bacteria</taxon>
        <taxon>Pseudomonadati</taxon>
        <taxon>Pseudomonadota</taxon>
        <taxon>Alphaproteobacteria</taxon>
        <taxon>Rickettsiales</taxon>
        <taxon>Rickettsiaceae</taxon>
        <taxon>Rickettsieae</taxon>
        <taxon>Rickettsia</taxon>
        <taxon>typhus group</taxon>
    </lineage>
</organism>
<protein>
    <recommendedName>
        <fullName evidence="1">Endolytic peptidoglycan transglycosylase RlpA</fullName>
        <ecNumber evidence="1">4.2.2.-</ecNumber>
    </recommendedName>
</protein>
<comment type="function">
    <text evidence="1">Lytic transglycosylase with a strong preference for naked glycan strands that lack stem peptides.</text>
</comment>
<comment type="similarity">
    <text evidence="1">Belongs to the RlpA family.</text>
</comment>
<reference key="1">
    <citation type="journal article" date="1998" name="Nature">
        <title>The genome sequence of Rickettsia prowazekii and the origin of mitochondria.</title>
        <authorList>
            <person name="Andersson S.G.E."/>
            <person name="Zomorodipour A."/>
            <person name="Andersson J.O."/>
            <person name="Sicheritz-Ponten T."/>
            <person name="Alsmark U.C.M."/>
            <person name="Podowski R.M."/>
            <person name="Naeslund A.K."/>
            <person name="Eriksson A.-S."/>
            <person name="Winkler H.H."/>
            <person name="Kurland C.G."/>
        </authorList>
    </citation>
    <scope>NUCLEOTIDE SEQUENCE [LARGE SCALE GENOMIC DNA]</scope>
    <source>
        <strain>Madrid E</strain>
    </source>
</reference>
<gene>
    <name evidence="1" type="primary">rlpA</name>
    <name type="ordered locus">RP390</name>
</gene>
<sequence>MIIMRNYKFKLEPLKQCQEAFKRYTVHSTALYIIALQANWSRRLIYKLSLYFCKIKNCYTTFKFEQSNRFIITKAERIIKIQHLIRFKDIVNNFISLINILLVLIFCINLSGCNASKKLSYSNKYSYKELSKDDPHNLTYIGHYKVGKNYKIKGKIYKPHTPKYFTETGYASWYGGRKDGFHGKTTANGDRFNRNLLTAAHKTLPLPCLVKVTNKVNNKSVILMVNDRGPFKKNRIIDVSQKAAEILAFKNQGVTKVRIEYLPNETEKFLKKINLKKPENKTFAKNHKKSLFTQITKNNQCSINCHIKLVNLKYKLAVNP</sequence>
<keyword id="KW-0961">Cell wall biogenesis/degradation</keyword>
<keyword id="KW-0456">Lyase</keyword>
<keyword id="KW-1185">Reference proteome</keyword>
<dbReference type="EC" id="4.2.2.-" evidence="1"/>
<dbReference type="EMBL" id="AJ235271">
    <property type="protein sequence ID" value="CAA14847.1"/>
    <property type="molecule type" value="Genomic_DNA"/>
</dbReference>
<dbReference type="PIR" id="E71696">
    <property type="entry name" value="E71696"/>
</dbReference>
<dbReference type="RefSeq" id="NP_220771.1">
    <property type="nucleotide sequence ID" value="NC_000963.1"/>
</dbReference>
<dbReference type="RefSeq" id="WP_010886281.1">
    <property type="nucleotide sequence ID" value="NC_000963.1"/>
</dbReference>
<dbReference type="SMR" id="Q9ZDE1"/>
<dbReference type="STRING" id="272947.gene:17555470"/>
<dbReference type="EnsemblBacteria" id="CAA14847">
    <property type="protein sequence ID" value="CAA14847"/>
    <property type="gene ID" value="CAA14847"/>
</dbReference>
<dbReference type="KEGG" id="rpr:RP390"/>
<dbReference type="PATRIC" id="fig|272947.5.peg.402"/>
<dbReference type="eggNOG" id="COG0797">
    <property type="taxonomic scope" value="Bacteria"/>
</dbReference>
<dbReference type="HOGENOM" id="CLU_042923_6_1_5"/>
<dbReference type="OrthoDB" id="9779128at2"/>
<dbReference type="Proteomes" id="UP000002480">
    <property type="component" value="Chromosome"/>
</dbReference>
<dbReference type="GO" id="GO:0008932">
    <property type="term" value="F:lytic endotransglycosylase activity"/>
    <property type="evidence" value="ECO:0007669"/>
    <property type="project" value="UniProtKB-UniRule"/>
</dbReference>
<dbReference type="GO" id="GO:0071555">
    <property type="term" value="P:cell wall organization"/>
    <property type="evidence" value="ECO:0007669"/>
    <property type="project" value="UniProtKB-KW"/>
</dbReference>
<dbReference type="GO" id="GO:0000270">
    <property type="term" value="P:peptidoglycan metabolic process"/>
    <property type="evidence" value="ECO:0007669"/>
    <property type="project" value="UniProtKB-UniRule"/>
</dbReference>
<dbReference type="CDD" id="cd22268">
    <property type="entry name" value="DPBB_RlpA-like"/>
    <property type="match status" value="1"/>
</dbReference>
<dbReference type="Gene3D" id="2.40.40.10">
    <property type="entry name" value="RlpA-like domain"/>
    <property type="match status" value="1"/>
</dbReference>
<dbReference type="HAMAP" id="MF_02071">
    <property type="entry name" value="RlpA"/>
    <property type="match status" value="1"/>
</dbReference>
<dbReference type="InterPro" id="IPR034718">
    <property type="entry name" value="RlpA"/>
</dbReference>
<dbReference type="InterPro" id="IPR009009">
    <property type="entry name" value="RlpA-like_DPBB"/>
</dbReference>
<dbReference type="InterPro" id="IPR036908">
    <property type="entry name" value="RlpA-like_sf"/>
</dbReference>
<dbReference type="InterPro" id="IPR022438">
    <property type="entry name" value="RPE5"/>
</dbReference>
<dbReference type="InterPro" id="IPR012997">
    <property type="entry name" value="RplA"/>
</dbReference>
<dbReference type="NCBIfam" id="TIGR00413">
    <property type="entry name" value="rlpA"/>
    <property type="match status" value="1"/>
</dbReference>
<dbReference type="NCBIfam" id="TIGR03776">
    <property type="entry name" value="RPE5"/>
    <property type="match status" value="1"/>
</dbReference>
<dbReference type="PANTHER" id="PTHR34183">
    <property type="entry name" value="ENDOLYTIC PEPTIDOGLYCAN TRANSGLYCOSYLASE RLPA"/>
    <property type="match status" value="1"/>
</dbReference>
<dbReference type="PANTHER" id="PTHR34183:SF1">
    <property type="entry name" value="ENDOLYTIC PEPTIDOGLYCAN TRANSGLYCOSYLASE RLPA"/>
    <property type="match status" value="1"/>
</dbReference>
<dbReference type="Pfam" id="PF03330">
    <property type="entry name" value="DPBB_1"/>
    <property type="match status" value="1"/>
</dbReference>
<dbReference type="SUPFAM" id="SSF50685">
    <property type="entry name" value="Barwin-like endoglucanases"/>
    <property type="match status" value="1"/>
</dbReference>
<evidence type="ECO:0000255" key="1">
    <source>
        <dbReference type="HAMAP-Rule" id="MF_02071"/>
    </source>
</evidence>